<organism>
    <name type="scientific">Pseudomonas fluorescens (strain Pf0-1)</name>
    <dbReference type="NCBI Taxonomy" id="205922"/>
    <lineage>
        <taxon>Bacteria</taxon>
        <taxon>Pseudomonadati</taxon>
        <taxon>Pseudomonadota</taxon>
        <taxon>Gammaproteobacteria</taxon>
        <taxon>Pseudomonadales</taxon>
        <taxon>Pseudomonadaceae</taxon>
        <taxon>Pseudomonas</taxon>
    </lineage>
</organism>
<reference key="1">
    <citation type="journal article" date="2009" name="Genome Biol.">
        <title>Genomic and genetic analyses of diversity and plant interactions of Pseudomonas fluorescens.</title>
        <authorList>
            <person name="Silby M.W."/>
            <person name="Cerdeno-Tarraga A.M."/>
            <person name="Vernikos G.S."/>
            <person name="Giddens S.R."/>
            <person name="Jackson R.W."/>
            <person name="Preston G.M."/>
            <person name="Zhang X.-X."/>
            <person name="Moon C.D."/>
            <person name="Gehrig S.M."/>
            <person name="Godfrey S.A.C."/>
            <person name="Knight C.G."/>
            <person name="Malone J.G."/>
            <person name="Robinson Z."/>
            <person name="Spiers A.J."/>
            <person name="Harris S."/>
            <person name="Challis G.L."/>
            <person name="Yaxley A.M."/>
            <person name="Harris D."/>
            <person name="Seeger K."/>
            <person name="Murphy L."/>
            <person name="Rutter S."/>
            <person name="Squares R."/>
            <person name="Quail M.A."/>
            <person name="Saunders E."/>
            <person name="Mavromatis K."/>
            <person name="Brettin T.S."/>
            <person name="Bentley S.D."/>
            <person name="Hothersall J."/>
            <person name="Stephens E."/>
            <person name="Thomas C.M."/>
            <person name="Parkhill J."/>
            <person name="Levy S.B."/>
            <person name="Rainey P.B."/>
            <person name="Thomson N.R."/>
        </authorList>
    </citation>
    <scope>NUCLEOTIDE SEQUENCE [LARGE SCALE GENOMIC DNA]</scope>
    <source>
        <strain>Pf0-1</strain>
    </source>
</reference>
<evidence type="ECO:0000255" key="1">
    <source>
        <dbReference type="HAMAP-Rule" id="MF_01953"/>
    </source>
</evidence>
<sequence>MKISRQAYADMFGPTVGDKVRLADTELWIEVEQDFTTYGEEVKFGGGKVIRDGQGQSQLLAAEVVDTVITNALIIDHWGIVKADVGLKDGRIAAIGKAGNPDVQPGVTIAIGASSEVIAGEGMILTAGGIDTHIHFICPQQIEEALMSGVTTMIGGGTGPATGTNATTCTSGPWHLARMLQAADAFPMNIGLTGKGNASLPEPLIEQVKAGAIGLKLHEDWGTTPASIDNCLSVADQYDVQVAIHTDTLNESGFVETTLGAFKGRTIHTYHTEGAGGGHAPDIIKACGFANVLPSSTNPTRPFTRNTIDEHLDMLMVCHHLDPSIAEDVAFAESRIRRETIAAEDILHDLGAFSMISSDSQAMGRVGEVITRTWQTADKMKKQRGPLPQDGEGNDNFRAKRYIAKYTINPAITHGISHEVGSVEVGKWADLVLWRPAFFGVKPTLILKGGAIAASLMGDANASIPTPQPVHYRPMFASYGGSLHATSLTFISQAAQASGLPEALGLKKKIAVVKGCRDVQKTDLIHNDYLPNIDVDPQTYQVKADGVLLWCEPAETLPMAQRYFLF</sequence>
<accession>Q3KIT2</accession>
<comment type="catalytic activity">
    <reaction evidence="1">
        <text>urea + 2 H2O + H(+) = hydrogencarbonate + 2 NH4(+)</text>
        <dbReference type="Rhea" id="RHEA:20557"/>
        <dbReference type="ChEBI" id="CHEBI:15377"/>
        <dbReference type="ChEBI" id="CHEBI:15378"/>
        <dbReference type="ChEBI" id="CHEBI:16199"/>
        <dbReference type="ChEBI" id="CHEBI:17544"/>
        <dbReference type="ChEBI" id="CHEBI:28938"/>
        <dbReference type="EC" id="3.5.1.5"/>
    </reaction>
</comment>
<comment type="cofactor">
    <cofactor evidence="1">
        <name>Ni cation</name>
        <dbReference type="ChEBI" id="CHEBI:25516"/>
    </cofactor>
    <text evidence="1">Binds 2 nickel ions per subunit.</text>
</comment>
<comment type="pathway">
    <text evidence="1">Nitrogen metabolism; urea degradation; CO(2) and NH(3) from urea (urease route): step 1/1.</text>
</comment>
<comment type="subunit">
    <text evidence="1">Heterotrimer of UreA (gamma), UreB (beta) and UreC (alpha) subunits. Three heterotrimers associate to form the active enzyme.</text>
</comment>
<comment type="subcellular location">
    <subcellularLocation>
        <location evidence="1">Cytoplasm</location>
    </subcellularLocation>
</comment>
<comment type="PTM">
    <text evidence="1">Carboxylation allows a single lysine to coordinate two nickel ions.</text>
</comment>
<comment type="similarity">
    <text evidence="1">Belongs to the metallo-dependent hydrolases superfamily. Urease alpha subunit family.</text>
</comment>
<proteinExistence type="inferred from homology"/>
<gene>
    <name evidence="1" type="primary">ureC</name>
    <name type="ordered locus">Pfl01_0580</name>
</gene>
<keyword id="KW-0963">Cytoplasm</keyword>
<keyword id="KW-0378">Hydrolase</keyword>
<keyword id="KW-0479">Metal-binding</keyword>
<keyword id="KW-0533">Nickel</keyword>
<dbReference type="EC" id="3.5.1.5" evidence="1"/>
<dbReference type="EMBL" id="CP000094">
    <property type="protein sequence ID" value="ABA72324.1"/>
    <property type="molecule type" value="Genomic_DNA"/>
</dbReference>
<dbReference type="RefSeq" id="WP_011332230.1">
    <property type="nucleotide sequence ID" value="NC_007492.2"/>
</dbReference>
<dbReference type="SMR" id="Q3KIT2"/>
<dbReference type="MEROPS" id="M38.982"/>
<dbReference type="KEGG" id="pfo:Pfl01_0580"/>
<dbReference type="eggNOG" id="COG0804">
    <property type="taxonomic scope" value="Bacteria"/>
</dbReference>
<dbReference type="HOGENOM" id="CLU_000980_0_0_6"/>
<dbReference type="UniPathway" id="UPA00258">
    <property type="reaction ID" value="UER00370"/>
</dbReference>
<dbReference type="Proteomes" id="UP000002704">
    <property type="component" value="Chromosome"/>
</dbReference>
<dbReference type="GO" id="GO:0005737">
    <property type="term" value="C:cytoplasm"/>
    <property type="evidence" value="ECO:0007669"/>
    <property type="project" value="UniProtKB-SubCell"/>
</dbReference>
<dbReference type="GO" id="GO:0016151">
    <property type="term" value="F:nickel cation binding"/>
    <property type="evidence" value="ECO:0007669"/>
    <property type="project" value="UniProtKB-UniRule"/>
</dbReference>
<dbReference type="GO" id="GO:0009039">
    <property type="term" value="F:urease activity"/>
    <property type="evidence" value="ECO:0007669"/>
    <property type="project" value="UniProtKB-UniRule"/>
</dbReference>
<dbReference type="GO" id="GO:0043419">
    <property type="term" value="P:urea catabolic process"/>
    <property type="evidence" value="ECO:0007669"/>
    <property type="project" value="UniProtKB-UniRule"/>
</dbReference>
<dbReference type="CDD" id="cd00375">
    <property type="entry name" value="Urease_alpha"/>
    <property type="match status" value="1"/>
</dbReference>
<dbReference type="Gene3D" id="3.20.20.140">
    <property type="entry name" value="Metal-dependent hydrolases"/>
    <property type="match status" value="1"/>
</dbReference>
<dbReference type="Gene3D" id="2.30.40.10">
    <property type="entry name" value="Urease, subunit C, domain 1"/>
    <property type="match status" value="1"/>
</dbReference>
<dbReference type="HAMAP" id="MF_01953">
    <property type="entry name" value="Urease_alpha"/>
    <property type="match status" value="1"/>
</dbReference>
<dbReference type="InterPro" id="IPR006680">
    <property type="entry name" value="Amidohydro-rel"/>
</dbReference>
<dbReference type="InterPro" id="IPR011059">
    <property type="entry name" value="Metal-dep_hydrolase_composite"/>
</dbReference>
<dbReference type="InterPro" id="IPR032466">
    <property type="entry name" value="Metal_Hydrolase"/>
</dbReference>
<dbReference type="InterPro" id="IPR011612">
    <property type="entry name" value="Urease_alpha_N_dom"/>
</dbReference>
<dbReference type="InterPro" id="IPR050112">
    <property type="entry name" value="Urease_alpha_subunit"/>
</dbReference>
<dbReference type="InterPro" id="IPR017950">
    <property type="entry name" value="Urease_AS"/>
</dbReference>
<dbReference type="InterPro" id="IPR005848">
    <property type="entry name" value="Urease_asu"/>
</dbReference>
<dbReference type="InterPro" id="IPR017951">
    <property type="entry name" value="Urease_asu_c"/>
</dbReference>
<dbReference type="InterPro" id="IPR029754">
    <property type="entry name" value="Urease_Ni-bd"/>
</dbReference>
<dbReference type="NCBIfam" id="NF009685">
    <property type="entry name" value="PRK13206.1"/>
    <property type="match status" value="1"/>
</dbReference>
<dbReference type="NCBIfam" id="NF009686">
    <property type="entry name" value="PRK13207.1"/>
    <property type="match status" value="1"/>
</dbReference>
<dbReference type="NCBIfam" id="TIGR01792">
    <property type="entry name" value="urease_alph"/>
    <property type="match status" value="1"/>
</dbReference>
<dbReference type="PANTHER" id="PTHR43440">
    <property type="entry name" value="UREASE"/>
    <property type="match status" value="1"/>
</dbReference>
<dbReference type="PANTHER" id="PTHR43440:SF1">
    <property type="entry name" value="UREASE"/>
    <property type="match status" value="1"/>
</dbReference>
<dbReference type="Pfam" id="PF01979">
    <property type="entry name" value="Amidohydro_1"/>
    <property type="match status" value="1"/>
</dbReference>
<dbReference type="Pfam" id="PF00449">
    <property type="entry name" value="Urease_alpha"/>
    <property type="match status" value="1"/>
</dbReference>
<dbReference type="PRINTS" id="PR01752">
    <property type="entry name" value="UREASE"/>
</dbReference>
<dbReference type="SUPFAM" id="SSF51338">
    <property type="entry name" value="Composite domain of metallo-dependent hydrolases"/>
    <property type="match status" value="2"/>
</dbReference>
<dbReference type="SUPFAM" id="SSF51556">
    <property type="entry name" value="Metallo-dependent hydrolases"/>
    <property type="match status" value="1"/>
</dbReference>
<dbReference type="PROSITE" id="PS01120">
    <property type="entry name" value="UREASE_1"/>
    <property type="match status" value="1"/>
</dbReference>
<dbReference type="PROSITE" id="PS00145">
    <property type="entry name" value="UREASE_2"/>
    <property type="match status" value="1"/>
</dbReference>
<dbReference type="PROSITE" id="PS51368">
    <property type="entry name" value="UREASE_3"/>
    <property type="match status" value="1"/>
</dbReference>
<protein>
    <recommendedName>
        <fullName evidence="1">Urease subunit alpha</fullName>
        <ecNumber evidence="1">3.5.1.5</ecNumber>
    </recommendedName>
    <alternativeName>
        <fullName evidence="1">Urea amidohydrolase subunit alpha</fullName>
    </alternativeName>
</protein>
<feature type="chain" id="PRO_0000234169" description="Urease subunit alpha">
    <location>
        <begin position="1"/>
        <end position="566"/>
    </location>
</feature>
<feature type="domain" description="Urease" evidence="1">
    <location>
        <begin position="128"/>
        <end position="566"/>
    </location>
</feature>
<feature type="active site" description="Proton donor" evidence="1">
    <location>
        <position position="319"/>
    </location>
</feature>
<feature type="binding site" evidence="1">
    <location>
        <position position="133"/>
    </location>
    <ligand>
        <name>Ni(2+)</name>
        <dbReference type="ChEBI" id="CHEBI:49786"/>
        <label>1</label>
    </ligand>
</feature>
<feature type="binding site" evidence="1">
    <location>
        <position position="135"/>
    </location>
    <ligand>
        <name>Ni(2+)</name>
        <dbReference type="ChEBI" id="CHEBI:49786"/>
        <label>1</label>
    </ligand>
</feature>
<feature type="binding site" description="via carbamate group" evidence="1">
    <location>
        <position position="216"/>
    </location>
    <ligand>
        <name>Ni(2+)</name>
        <dbReference type="ChEBI" id="CHEBI:49786"/>
        <label>1</label>
    </ligand>
</feature>
<feature type="binding site" description="via carbamate group" evidence="1">
    <location>
        <position position="216"/>
    </location>
    <ligand>
        <name>Ni(2+)</name>
        <dbReference type="ChEBI" id="CHEBI:49786"/>
        <label>2</label>
    </ligand>
</feature>
<feature type="binding site" evidence="1">
    <location>
        <position position="218"/>
    </location>
    <ligand>
        <name>substrate</name>
    </ligand>
</feature>
<feature type="binding site" evidence="1">
    <location>
        <position position="245"/>
    </location>
    <ligand>
        <name>Ni(2+)</name>
        <dbReference type="ChEBI" id="CHEBI:49786"/>
        <label>2</label>
    </ligand>
</feature>
<feature type="binding site" evidence="1">
    <location>
        <position position="271"/>
    </location>
    <ligand>
        <name>Ni(2+)</name>
        <dbReference type="ChEBI" id="CHEBI:49786"/>
        <label>2</label>
    </ligand>
</feature>
<feature type="binding site" evidence="1">
    <location>
        <position position="359"/>
    </location>
    <ligand>
        <name>Ni(2+)</name>
        <dbReference type="ChEBI" id="CHEBI:49786"/>
        <label>1</label>
    </ligand>
</feature>
<feature type="modified residue" description="N6-carboxylysine" evidence="1">
    <location>
        <position position="216"/>
    </location>
</feature>
<name>URE1_PSEPF</name>